<organism>
    <name type="scientific">Prosthecochloris aestuarii (strain DSM 271 / SK 413)</name>
    <dbReference type="NCBI Taxonomy" id="290512"/>
    <lineage>
        <taxon>Bacteria</taxon>
        <taxon>Pseudomonadati</taxon>
        <taxon>Chlorobiota</taxon>
        <taxon>Chlorobiia</taxon>
        <taxon>Chlorobiales</taxon>
        <taxon>Chlorobiaceae</taxon>
        <taxon>Prosthecochloris</taxon>
    </lineage>
</organism>
<feature type="chain" id="PRO_1000124999" description="Nucleoside diphosphate kinase">
    <location>
        <begin position="1"/>
        <end position="141"/>
    </location>
</feature>
<feature type="active site" description="Pros-phosphohistidine intermediate" evidence="1">
    <location>
        <position position="115"/>
    </location>
</feature>
<feature type="binding site" evidence="1">
    <location>
        <position position="9"/>
    </location>
    <ligand>
        <name>ATP</name>
        <dbReference type="ChEBI" id="CHEBI:30616"/>
    </ligand>
</feature>
<feature type="binding site" evidence="1">
    <location>
        <position position="57"/>
    </location>
    <ligand>
        <name>ATP</name>
        <dbReference type="ChEBI" id="CHEBI:30616"/>
    </ligand>
</feature>
<feature type="binding site" evidence="1">
    <location>
        <position position="85"/>
    </location>
    <ligand>
        <name>ATP</name>
        <dbReference type="ChEBI" id="CHEBI:30616"/>
    </ligand>
</feature>
<feature type="binding site" evidence="1">
    <location>
        <position position="91"/>
    </location>
    <ligand>
        <name>ATP</name>
        <dbReference type="ChEBI" id="CHEBI:30616"/>
    </ligand>
</feature>
<feature type="binding site" evidence="1">
    <location>
        <position position="102"/>
    </location>
    <ligand>
        <name>ATP</name>
        <dbReference type="ChEBI" id="CHEBI:30616"/>
    </ligand>
</feature>
<feature type="binding site" evidence="1">
    <location>
        <position position="112"/>
    </location>
    <ligand>
        <name>ATP</name>
        <dbReference type="ChEBI" id="CHEBI:30616"/>
    </ligand>
</feature>
<dbReference type="EC" id="2.7.4.6" evidence="1"/>
<dbReference type="EMBL" id="CP001108">
    <property type="protein sequence ID" value="ACF47019.1"/>
    <property type="molecule type" value="Genomic_DNA"/>
</dbReference>
<dbReference type="RefSeq" id="WP_012506552.1">
    <property type="nucleotide sequence ID" value="NC_011059.1"/>
</dbReference>
<dbReference type="SMR" id="B4S573"/>
<dbReference type="STRING" id="290512.Paes_2009"/>
<dbReference type="KEGG" id="paa:Paes_2009"/>
<dbReference type="eggNOG" id="COG0105">
    <property type="taxonomic scope" value="Bacteria"/>
</dbReference>
<dbReference type="HOGENOM" id="CLU_060216_8_1_10"/>
<dbReference type="Proteomes" id="UP000002725">
    <property type="component" value="Chromosome"/>
</dbReference>
<dbReference type="GO" id="GO:0005737">
    <property type="term" value="C:cytoplasm"/>
    <property type="evidence" value="ECO:0007669"/>
    <property type="project" value="UniProtKB-SubCell"/>
</dbReference>
<dbReference type="GO" id="GO:0005524">
    <property type="term" value="F:ATP binding"/>
    <property type="evidence" value="ECO:0007669"/>
    <property type="project" value="UniProtKB-UniRule"/>
</dbReference>
<dbReference type="GO" id="GO:0046872">
    <property type="term" value="F:metal ion binding"/>
    <property type="evidence" value="ECO:0007669"/>
    <property type="project" value="UniProtKB-KW"/>
</dbReference>
<dbReference type="GO" id="GO:0004550">
    <property type="term" value="F:nucleoside diphosphate kinase activity"/>
    <property type="evidence" value="ECO:0007669"/>
    <property type="project" value="UniProtKB-UniRule"/>
</dbReference>
<dbReference type="GO" id="GO:0006241">
    <property type="term" value="P:CTP biosynthetic process"/>
    <property type="evidence" value="ECO:0007669"/>
    <property type="project" value="UniProtKB-UniRule"/>
</dbReference>
<dbReference type="GO" id="GO:0006183">
    <property type="term" value="P:GTP biosynthetic process"/>
    <property type="evidence" value="ECO:0007669"/>
    <property type="project" value="UniProtKB-UniRule"/>
</dbReference>
<dbReference type="GO" id="GO:0006228">
    <property type="term" value="P:UTP biosynthetic process"/>
    <property type="evidence" value="ECO:0007669"/>
    <property type="project" value="UniProtKB-UniRule"/>
</dbReference>
<dbReference type="CDD" id="cd04413">
    <property type="entry name" value="NDPk_I"/>
    <property type="match status" value="1"/>
</dbReference>
<dbReference type="FunFam" id="3.30.70.141:FF:000003">
    <property type="entry name" value="Nucleoside diphosphate kinase"/>
    <property type="match status" value="1"/>
</dbReference>
<dbReference type="Gene3D" id="3.30.70.141">
    <property type="entry name" value="Nucleoside diphosphate kinase-like domain"/>
    <property type="match status" value="1"/>
</dbReference>
<dbReference type="HAMAP" id="MF_00451">
    <property type="entry name" value="NDP_kinase"/>
    <property type="match status" value="1"/>
</dbReference>
<dbReference type="InterPro" id="IPR034907">
    <property type="entry name" value="NDK-like_dom"/>
</dbReference>
<dbReference type="InterPro" id="IPR036850">
    <property type="entry name" value="NDK-like_dom_sf"/>
</dbReference>
<dbReference type="InterPro" id="IPR001564">
    <property type="entry name" value="Nucleoside_diP_kinase"/>
</dbReference>
<dbReference type="NCBIfam" id="NF001908">
    <property type="entry name" value="PRK00668.1"/>
    <property type="match status" value="1"/>
</dbReference>
<dbReference type="NCBIfam" id="NF011113">
    <property type="entry name" value="PRK14541.1"/>
    <property type="match status" value="1"/>
</dbReference>
<dbReference type="PANTHER" id="PTHR46161">
    <property type="entry name" value="NUCLEOSIDE DIPHOSPHATE KINASE"/>
    <property type="match status" value="1"/>
</dbReference>
<dbReference type="PANTHER" id="PTHR46161:SF3">
    <property type="entry name" value="NUCLEOSIDE DIPHOSPHATE KINASE DDB_G0292928-RELATED"/>
    <property type="match status" value="1"/>
</dbReference>
<dbReference type="Pfam" id="PF00334">
    <property type="entry name" value="NDK"/>
    <property type="match status" value="1"/>
</dbReference>
<dbReference type="PRINTS" id="PR01243">
    <property type="entry name" value="NUCDPKINASE"/>
</dbReference>
<dbReference type="SMART" id="SM00562">
    <property type="entry name" value="NDK"/>
    <property type="match status" value="1"/>
</dbReference>
<dbReference type="SUPFAM" id="SSF54919">
    <property type="entry name" value="Nucleoside diphosphate kinase, NDK"/>
    <property type="match status" value="1"/>
</dbReference>
<dbReference type="PROSITE" id="PS51374">
    <property type="entry name" value="NDPK_LIKE"/>
    <property type="match status" value="1"/>
</dbReference>
<evidence type="ECO:0000255" key="1">
    <source>
        <dbReference type="HAMAP-Rule" id="MF_00451"/>
    </source>
</evidence>
<protein>
    <recommendedName>
        <fullName evidence="1">Nucleoside diphosphate kinase</fullName>
        <shortName evidence="1">NDK</shortName>
        <shortName evidence="1">NDP kinase</shortName>
        <ecNumber evidence="1">2.7.4.6</ecNumber>
    </recommendedName>
    <alternativeName>
        <fullName evidence="1">Nucleoside-2-P kinase</fullName>
    </alternativeName>
</protein>
<name>NDK_PROA2</name>
<comment type="function">
    <text evidence="1">Major role in the synthesis of nucleoside triphosphates other than ATP. The ATP gamma phosphate is transferred to the NDP beta phosphate via a ping-pong mechanism, using a phosphorylated active-site intermediate.</text>
</comment>
<comment type="catalytic activity">
    <reaction evidence="1">
        <text>a 2'-deoxyribonucleoside 5'-diphosphate + ATP = a 2'-deoxyribonucleoside 5'-triphosphate + ADP</text>
        <dbReference type="Rhea" id="RHEA:44640"/>
        <dbReference type="ChEBI" id="CHEBI:30616"/>
        <dbReference type="ChEBI" id="CHEBI:61560"/>
        <dbReference type="ChEBI" id="CHEBI:73316"/>
        <dbReference type="ChEBI" id="CHEBI:456216"/>
        <dbReference type="EC" id="2.7.4.6"/>
    </reaction>
</comment>
<comment type="catalytic activity">
    <reaction evidence="1">
        <text>a ribonucleoside 5'-diphosphate + ATP = a ribonucleoside 5'-triphosphate + ADP</text>
        <dbReference type="Rhea" id="RHEA:18113"/>
        <dbReference type="ChEBI" id="CHEBI:30616"/>
        <dbReference type="ChEBI" id="CHEBI:57930"/>
        <dbReference type="ChEBI" id="CHEBI:61557"/>
        <dbReference type="ChEBI" id="CHEBI:456216"/>
        <dbReference type="EC" id="2.7.4.6"/>
    </reaction>
</comment>
<comment type="cofactor">
    <cofactor evidence="1">
        <name>Mg(2+)</name>
        <dbReference type="ChEBI" id="CHEBI:18420"/>
    </cofactor>
</comment>
<comment type="subunit">
    <text evidence="1">Homotetramer.</text>
</comment>
<comment type="subcellular location">
    <subcellularLocation>
        <location evidence="1">Cytoplasm</location>
    </subcellularLocation>
</comment>
<comment type="similarity">
    <text evidence="1">Belongs to the NDK family.</text>
</comment>
<reference key="1">
    <citation type="submission" date="2008-06" db="EMBL/GenBank/DDBJ databases">
        <title>Complete sequence of chromosome of Prosthecochloris aestuarii DSM 271.</title>
        <authorList>
            <consortium name="US DOE Joint Genome Institute"/>
            <person name="Lucas S."/>
            <person name="Copeland A."/>
            <person name="Lapidus A."/>
            <person name="Glavina del Rio T."/>
            <person name="Dalin E."/>
            <person name="Tice H."/>
            <person name="Bruce D."/>
            <person name="Goodwin L."/>
            <person name="Pitluck S."/>
            <person name="Schmutz J."/>
            <person name="Larimer F."/>
            <person name="Land M."/>
            <person name="Hauser L."/>
            <person name="Kyrpides N."/>
            <person name="Anderson I."/>
            <person name="Liu Z."/>
            <person name="Li T."/>
            <person name="Zhao F."/>
            <person name="Overmann J."/>
            <person name="Bryant D.A."/>
            <person name="Richardson P."/>
        </authorList>
    </citation>
    <scope>NUCLEOTIDE SEQUENCE [LARGE SCALE GENOMIC DNA]</scope>
    <source>
        <strain>DSM 271 / SK 413</strain>
    </source>
</reference>
<gene>
    <name evidence="1" type="primary">ndk</name>
    <name type="ordered locus">Paes_2009</name>
</gene>
<proteinExistence type="inferred from homology"/>
<accession>B4S573</accession>
<sequence length="141" mass="15457">MERTLTILKPDCVRKQLIGAVIDKIERAGFRVVAMKKTKLTAQTAGEFYAVHSQRPFYGELVEFMSSGPCVPMILEKENAVADFRTLIGATDPAEAAEGTIRNLFADSKGENIIHGSDSAENAQIEAGFFFSTEEAVRVNN</sequence>
<keyword id="KW-0067">ATP-binding</keyword>
<keyword id="KW-0963">Cytoplasm</keyword>
<keyword id="KW-0418">Kinase</keyword>
<keyword id="KW-0460">Magnesium</keyword>
<keyword id="KW-0479">Metal-binding</keyword>
<keyword id="KW-0546">Nucleotide metabolism</keyword>
<keyword id="KW-0547">Nucleotide-binding</keyword>
<keyword id="KW-0597">Phosphoprotein</keyword>
<keyword id="KW-0808">Transferase</keyword>